<proteinExistence type="inferred from homology"/>
<organism>
    <name type="scientific">Saccharopolyspora erythraea (strain ATCC 11635 / DSM 40517 / JCM 4748 / NBRC 13426 / NCIMB 8594 / NRRL 2338)</name>
    <dbReference type="NCBI Taxonomy" id="405948"/>
    <lineage>
        <taxon>Bacteria</taxon>
        <taxon>Bacillati</taxon>
        <taxon>Actinomycetota</taxon>
        <taxon>Actinomycetes</taxon>
        <taxon>Pseudonocardiales</taxon>
        <taxon>Pseudonocardiaceae</taxon>
        <taxon>Saccharopolyspora</taxon>
    </lineage>
</organism>
<sequence>MQTHEINQRFTEHFRKAGHTVVPSASLILDDPTLLFVNAGMVQFKPYFLGDAPAPYPRATSIQKCVRTGDIDEVGKTTRHNTFFQMAGNFSFGDYFKEGAMEHAWGLLTSSQADGGYGFDPERLWVTVFEKDEEAAALWQKVTGIPAERIQVRDAKDNYWDMGVPGPGGPCSEIYYDRGPKYGREGGPVVDEDRYIEIWNLVFMQDIRGELPPKEGHPPIGELPTKNIDTGMGVERVACLLQGVENVYETDLVRPVIAKAEELSGRSYGANHEDDVRFRVIADHARSGVMLVGDGVTPGNEARGYVLRRLLRRIIRSTRLLGVHEPVLGEFAAVVRDAMAPSYPELVTEFDRIDSVMRNEEDAFLSTLTAGSKIFDLAVADTKKAGGTQLAGAKAFQLHDTYGFPIDLTLEMASEQGLSVDEHGFRELMSEQRRRAKEDAKSRKSGHGDLSTYRTLLDQHGTTEFLGYTDLQAQSRVLGLLVDGVPAKSAAAGTEVELILDRTPFYAEGGGQIADTGRLTGPGVEVEVHDVQRAVPGLFVHRAKVTAGELGVDTSLEAAVDSKRRHAIERSHSATHLVHAAVRSAYGKRAAQAGSLNSPGRMRFDFTAPAAVSGAVLGGVEEEVNSYLQNDVEVQSYTTTMDRAMELGAVALFGEKYGDQVRVVDMGDYSRELCGGTHVGRIGQLGVVKLVADSSVGSGVHRVEALVGMDAMRHISKEHLLVSRLAEQFKVPAEELPERIAGVVSRLRSAEKELEQLRVAQVLQSAGELAGKGTDVHGVTLVAEQVPDGVDGGALRALAGEVRGRLGSRPAVVALFSADGDKVSFVVGVNTPAQDLGLKAGKLVPSFAAEVGGRGGGKPDMAQGGGSNPAGITAAIAALRTGLDQAVARG</sequence>
<evidence type="ECO:0000255" key="1">
    <source>
        <dbReference type="HAMAP-Rule" id="MF_00036"/>
    </source>
</evidence>
<name>SYA_SACEN</name>
<feature type="chain" id="PRO_0000347773" description="Alanine--tRNA ligase">
    <location>
        <begin position="1"/>
        <end position="890"/>
    </location>
</feature>
<feature type="binding site" evidence="1">
    <location>
        <position position="572"/>
    </location>
    <ligand>
        <name>Zn(2+)</name>
        <dbReference type="ChEBI" id="CHEBI:29105"/>
    </ligand>
</feature>
<feature type="binding site" evidence="1">
    <location>
        <position position="576"/>
    </location>
    <ligand>
        <name>Zn(2+)</name>
        <dbReference type="ChEBI" id="CHEBI:29105"/>
    </ligand>
</feature>
<feature type="binding site" evidence="1">
    <location>
        <position position="674"/>
    </location>
    <ligand>
        <name>Zn(2+)</name>
        <dbReference type="ChEBI" id="CHEBI:29105"/>
    </ligand>
</feature>
<feature type="binding site" evidence="1">
    <location>
        <position position="678"/>
    </location>
    <ligand>
        <name>Zn(2+)</name>
        <dbReference type="ChEBI" id="CHEBI:29105"/>
    </ligand>
</feature>
<accession>A4FBD3</accession>
<keyword id="KW-0030">Aminoacyl-tRNA synthetase</keyword>
<keyword id="KW-0067">ATP-binding</keyword>
<keyword id="KW-0963">Cytoplasm</keyword>
<keyword id="KW-0436">Ligase</keyword>
<keyword id="KW-0479">Metal-binding</keyword>
<keyword id="KW-0547">Nucleotide-binding</keyword>
<keyword id="KW-0648">Protein biosynthesis</keyword>
<keyword id="KW-1185">Reference proteome</keyword>
<keyword id="KW-0694">RNA-binding</keyword>
<keyword id="KW-0820">tRNA-binding</keyword>
<keyword id="KW-0862">Zinc</keyword>
<comment type="function">
    <text evidence="1">Catalyzes the attachment of alanine to tRNA(Ala) in a two-step reaction: alanine is first activated by ATP to form Ala-AMP and then transferred to the acceptor end of tRNA(Ala). Also edits incorrectly charged Ser-tRNA(Ala) and Gly-tRNA(Ala) via its editing domain.</text>
</comment>
<comment type="catalytic activity">
    <reaction evidence="1">
        <text>tRNA(Ala) + L-alanine + ATP = L-alanyl-tRNA(Ala) + AMP + diphosphate</text>
        <dbReference type="Rhea" id="RHEA:12540"/>
        <dbReference type="Rhea" id="RHEA-COMP:9657"/>
        <dbReference type="Rhea" id="RHEA-COMP:9923"/>
        <dbReference type="ChEBI" id="CHEBI:30616"/>
        <dbReference type="ChEBI" id="CHEBI:33019"/>
        <dbReference type="ChEBI" id="CHEBI:57972"/>
        <dbReference type="ChEBI" id="CHEBI:78442"/>
        <dbReference type="ChEBI" id="CHEBI:78497"/>
        <dbReference type="ChEBI" id="CHEBI:456215"/>
        <dbReference type="EC" id="6.1.1.7"/>
    </reaction>
</comment>
<comment type="cofactor">
    <cofactor evidence="1">
        <name>Zn(2+)</name>
        <dbReference type="ChEBI" id="CHEBI:29105"/>
    </cofactor>
    <text evidence="1">Binds 1 zinc ion per subunit.</text>
</comment>
<comment type="subcellular location">
    <subcellularLocation>
        <location evidence="1">Cytoplasm</location>
    </subcellularLocation>
</comment>
<comment type="domain">
    <text evidence="1">Consists of three domains; the N-terminal catalytic domain, the editing domain and the C-terminal C-Ala domain. The editing domain removes incorrectly charged amino acids, while the C-Ala domain, along with tRNA(Ala), serves as a bridge to cooperatively bring together the editing and aminoacylation centers thus stimulating deacylation of misacylated tRNAs.</text>
</comment>
<comment type="similarity">
    <text evidence="1">Belongs to the class-II aminoacyl-tRNA synthetase family.</text>
</comment>
<protein>
    <recommendedName>
        <fullName evidence="1">Alanine--tRNA ligase</fullName>
        <ecNumber evidence="1">6.1.1.7</ecNumber>
    </recommendedName>
    <alternativeName>
        <fullName evidence="1">Alanyl-tRNA synthetase</fullName>
        <shortName evidence="1">AlaRS</shortName>
    </alternativeName>
</protein>
<reference key="1">
    <citation type="journal article" date="2007" name="Nat. Biotechnol.">
        <title>Complete genome sequence of the erythromycin-producing bacterium Saccharopolyspora erythraea NRRL23338.</title>
        <authorList>
            <person name="Oliynyk M."/>
            <person name="Samborskyy M."/>
            <person name="Lester J.B."/>
            <person name="Mironenko T."/>
            <person name="Scott N."/>
            <person name="Dickens S."/>
            <person name="Haydock S.F."/>
            <person name="Leadlay P.F."/>
        </authorList>
    </citation>
    <scope>NUCLEOTIDE SEQUENCE [LARGE SCALE GENOMIC DNA]</scope>
    <source>
        <strain>ATCC 11635 / DSM 40517 / JCM 4748 / NBRC 13426 / NCIMB 8594 / NRRL 2338</strain>
    </source>
</reference>
<gene>
    <name evidence="1" type="primary">alaS</name>
    <name type="ordered locus">SACE_2052</name>
</gene>
<dbReference type="EC" id="6.1.1.7" evidence="1"/>
<dbReference type="EMBL" id="AM420293">
    <property type="protein sequence ID" value="CAM01358.1"/>
    <property type="molecule type" value="Genomic_DNA"/>
</dbReference>
<dbReference type="RefSeq" id="WP_009950848.1">
    <property type="nucleotide sequence ID" value="NC_009142.1"/>
</dbReference>
<dbReference type="SMR" id="A4FBD3"/>
<dbReference type="STRING" id="405948.SACE_2052"/>
<dbReference type="KEGG" id="sen:SACE_2052"/>
<dbReference type="eggNOG" id="COG0013">
    <property type="taxonomic scope" value="Bacteria"/>
</dbReference>
<dbReference type="HOGENOM" id="CLU_004485_1_1_11"/>
<dbReference type="OrthoDB" id="9803884at2"/>
<dbReference type="Proteomes" id="UP000006728">
    <property type="component" value="Chromosome"/>
</dbReference>
<dbReference type="GO" id="GO:0005829">
    <property type="term" value="C:cytosol"/>
    <property type="evidence" value="ECO:0007669"/>
    <property type="project" value="TreeGrafter"/>
</dbReference>
<dbReference type="GO" id="GO:0004813">
    <property type="term" value="F:alanine-tRNA ligase activity"/>
    <property type="evidence" value="ECO:0007669"/>
    <property type="project" value="UniProtKB-UniRule"/>
</dbReference>
<dbReference type="GO" id="GO:0002161">
    <property type="term" value="F:aminoacyl-tRNA deacylase activity"/>
    <property type="evidence" value="ECO:0007669"/>
    <property type="project" value="TreeGrafter"/>
</dbReference>
<dbReference type="GO" id="GO:0005524">
    <property type="term" value="F:ATP binding"/>
    <property type="evidence" value="ECO:0007669"/>
    <property type="project" value="UniProtKB-UniRule"/>
</dbReference>
<dbReference type="GO" id="GO:0000049">
    <property type="term" value="F:tRNA binding"/>
    <property type="evidence" value="ECO:0007669"/>
    <property type="project" value="UniProtKB-KW"/>
</dbReference>
<dbReference type="GO" id="GO:0008270">
    <property type="term" value="F:zinc ion binding"/>
    <property type="evidence" value="ECO:0007669"/>
    <property type="project" value="UniProtKB-UniRule"/>
</dbReference>
<dbReference type="GO" id="GO:0006419">
    <property type="term" value="P:alanyl-tRNA aminoacylation"/>
    <property type="evidence" value="ECO:0007669"/>
    <property type="project" value="UniProtKB-UniRule"/>
</dbReference>
<dbReference type="CDD" id="cd00673">
    <property type="entry name" value="AlaRS_core"/>
    <property type="match status" value="1"/>
</dbReference>
<dbReference type="FunFam" id="2.40.30.130:FF:000001">
    <property type="entry name" value="Alanine--tRNA ligase"/>
    <property type="match status" value="1"/>
</dbReference>
<dbReference type="FunFam" id="3.10.310.40:FF:000001">
    <property type="entry name" value="Alanine--tRNA ligase"/>
    <property type="match status" value="1"/>
</dbReference>
<dbReference type="FunFam" id="3.30.54.20:FF:000001">
    <property type="entry name" value="Alanine--tRNA ligase"/>
    <property type="match status" value="1"/>
</dbReference>
<dbReference type="FunFam" id="3.30.930.10:FF:000004">
    <property type="entry name" value="Alanine--tRNA ligase"/>
    <property type="match status" value="1"/>
</dbReference>
<dbReference type="FunFam" id="3.30.980.10:FF:000004">
    <property type="entry name" value="Alanine--tRNA ligase, cytoplasmic"/>
    <property type="match status" value="1"/>
</dbReference>
<dbReference type="Gene3D" id="2.40.30.130">
    <property type="match status" value="1"/>
</dbReference>
<dbReference type="Gene3D" id="3.10.310.40">
    <property type="match status" value="1"/>
</dbReference>
<dbReference type="Gene3D" id="3.30.54.20">
    <property type="match status" value="1"/>
</dbReference>
<dbReference type="Gene3D" id="6.10.250.550">
    <property type="match status" value="1"/>
</dbReference>
<dbReference type="Gene3D" id="3.30.930.10">
    <property type="entry name" value="Bira Bifunctional Protein, Domain 2"/>
    <property type="match status" value="1"/>
</dbReference>
<dbReference type="Gene3D" id="3.30.980.10">
    <property type="entry name" value="Threonyl-trna Synthetase, Chain A, domain 2"/>
    <property type="match status" value="1"/>
</dbReference>
<dbReference type="HAMAP" id="MF_00036_B">
    <property type="entry name" value="Ala_tRNA_synth_B"/>
    <property type="match status" value="1"/>
</dbReference>
<dbReference type="InterPro" id="IPR045864">
    <property type="entry name" value="aa-tRNA-synth_II/BPL/LPL"/>
</dbReference>
<dbReference type="InterPro" id="IPR002318">
    <property type="entry name" value="Ala-tRNA-lgiase_IIc"/>
</dbReference>
<dbReference type="InterPro" id="IPR018162">
    <property type="entry name" value="Ala-tRNA-ligase_IIc_anticod-bd"/>
</dbReference>
<dbReference type="InterPro" id="IPR018165">
    <property type="entry name" value="Ala-tRNA-synth_IIc_core"/>
</dbReference>
<dbReference type="InterPro" id="IPR018164">
    <property type="entry name" value="Ala-tRNA-synth_IIc_N"/>
</dbReference>
<dbReference type="InterPro" id="IPR050058">
    <property type="entry name" value="Ala-tRNA_ligase"/>
</dbReference>
<dbReference type="InterPro" id="IPR023033">
    <property type="entry name" value="Ala_tRNA_ligase_euk/bac"/>
</dbReference>
<dbReference type="InterPro" id="IPR003156">
    <property type="entry name" value="DHHA1_dom"/>
</dbReference>
<dbReference type="InterPro" id="IPR018163">
    <property type="entry name" value="Thr/Ala-tRNA-synth_IIc_edit"/>
</dbReference>
<dbReference type="InterPro" id="IPR009000">
    <property type="entry name" value="Transl_B-barrel_sf"/>
</dbReference>
<dbReference type="InterPro" id="IPR012947">
    <property type="entry name" value="tRNA_SAD"/>
</dbReference>
<dbReference type="NCBIfam" id="TIGR00344">
    <property type="entry name" value="alaS"/>
    <property type="match status" value="1"/>
</dbReference>
<dbReference type="PANTHER" id="PTHR11777:SF9">
    <property type="entry name" value="ALANINE--TRNA LIGASE, CYTOPLASMIC"/>
    <property type="match status" value="1"/>
</dbReference>
<dbReference type="PANTHER" id="PTHR11777">
    <property type="entry name" value="ALANYL-TRNA SYNTHETASE"/>
    <property type="match status" value="1"/>
</dbReference>
<dbReference type="Pfam" id="PF02272">
    <property type="entry name" value="DHHA1"/>
    <property type="match status" value="1"/>
</dbReference>
<dbReference type="Pfam" id="PF01411">
    <property type="entry name" value="tRNA-synt_2c"/>
    <property type="match status" value="1"/>
</dbReference>
<dbReference type="Pfam" id="PF07973">
    <property type="entry name" value="tRNA_SAD"/>
    <property type="match status" value="1"/>
</dbReference>
<dbReference type="PRINTS" id="PR00980">
    <property type="entry name" value="TRNASYNTHALA"/>
</dbReference>
<dbReference type="SMART" id="SM00863">
    <property type="entry name" value="tRNA_SAD"/>
    <property type="match status" value="1"/>
</dbReference>
<dbReference type="SUPFAM" id="SSF55681">
    <property type="entry name" value="Class II aaRS and biotin synthetases"/>
    <property type="match status" value="1"/>
</dbReference>
<dbReference type="SUPFAM" id="SSF101353">
    <property type="entry name" value="Putative anticodon-binding domain of alanyl-tRNA synthetase (AlaRS)"/>
    <property type="match status" value="1"/>
</dbReference>
<dbReference type="SUPFAM" id="SSF55186">
    <property type="entry name" value="ThrRS/AlaRS common domain"/>
    <property type="match status" value="1"/>
</dbReference>
<dbReference type="SUPFAM" id="SSF50447">
    <property type="entry name" value="Translation proteins"/>
    <property type="match status" value="1"/>
</dbReference>
<dbReference type="PROSITE" id="PS50860">
    <property type="entry name" value="AA_TRNA_LIGASE_II_ALA"/>
    <property type="match status" value="1"/>
</dbReference>